<protein>
    <recommendedName>
        <fullName evidence="1">Large ribosomal subunit protein uL6</fullName>
    </recommendedName>
    <alternativeName>
        <fullName evidence="2">50S ribosomal protein L6</fullName>
    </alternativeName>
</protein>
<accession>Q0TMR1</accession>
<feature type="chain" id="PRO_0000260851" description="Large ribosomal subunit protein uL6">
    <location>
        <begin position="1"/>
        <end position="179"/>
    </location>
</feature>
<organism>
    <name type="scientific">Clostridium perfringens (strain ATCC 13124 / DSM 756 / JCM 1290 / NCIMB 6125 / NCTC 8237 / Type A)</name>
    <dbReference type="NCBI Taxonomy" id="195103"/>
    <lineage>
        <taxon>Bacteria</taxon>
        <taxon>Bacillati</taxon>
        <taxon>Bacillota</taxon>
        <taxon>Clostridia</taxon>
        <taxon>Eubacteriales</taxon>
        <taxon>Clostridiaceae</taxon>
        <taxon>Clostridium</taxon>
    </lineage>
</organism>
<evidence type="ECO:0000255" key="1">
    <source>
        <dbReference type="HAMAP-Rule" id="MF_01365"/>
    </source>
</evidence>
<evidence type="ECO:0000305" key="2"/>
<keyword id="KW-0687">Ribonucleoprotein</keyword>
<keyword id="KW-0689">Ribosomal protein</keyword>
<keyword id="KW-0694">RNA-binding</keyword>
<keyword id="KW-0699">rRNA-binding</keyword>
<name>RL6_CLOP1</name>
<proteinExistence type="inferred from homology"/>
<dbReference type="EMBL" id="CP000246">
    <property type="protein sequence ID" value="ABG83096.1"/>
    <property type="molecule type" value="Genomic_DNA"/>
</dbReference>
<dbReference type="RefSeq" id="WP_003454268.1">
    <property type="nucleotide sequence ID" value="NC_008261.1"/>
</dbReference>
<dbReference type="SMR" id="Q0TMR1"/>
<dbReference type="STRING" id="195103.CPF_2699"/>
<dbReference type="PaxDb" id="195103-CPF_2699"/>
<dbReference type="GeneID" id="93001024"/>
<dbReference type="KEGG" id="cpf:CPF_2699"/>
<dbReference type="eggNOG" id="COG0097">
    <property type="taxonomic scope" value="Bacteria"/>
</dbReference>
<dbReference type="HOGENOM" id="CLU_065464_1_2_9"/>
<dbReference type="Proteomes" id="UP000001823">
    <property type="component" value="Chromosome"/>
</dbReference>
<dbReference type="GO" id="GO:0022625">
    <property type="term" value="C:cytosolic large ribosomal subunit"/>
    <property type="evidence" value="ECO:0007669"/>
    <property type="project" value="TreeGrafter"/>
</dbReference>
<dbReference type="GO" id="GO:0019843">
    <property type="term" value="F:rRNA binding"/>
    <property type="evidence" value="ECO:0007669"/>
    <property type="project" value="UniProtKB-UniRule"/>
</dbReference>
<dbReference type="GO" id="GO:0003735">
    <property type="term" value="F:structural constituent of ribosome"/>
    <property type="evidence" value="ECO:0007669"/>
    <property type="project" value="InterPro"/>
</dbReference>
<dbReference type="GO" id="GO:0002181">
    <property type="term" value="P:cytoplasmic translation"/>
    <property type="evidence" value="ECO:0007669"/>
    <property type="project" value="TreeGrafter"/>
</dbReference>
<dbReference type="FunFam" id="3.90.930.12:FF:000001">
    <property type="entry name" value="50S ribosomal protein L6"/>
    <property type="match status" value="1"/>
</dbReference>
<dbReference type="FunFam" id="3.90.930.12:FF:000002">
    <property type="entry name" value="50S ribosomal protein L6"/>
    <property type="match status" value="1"/>
</dbReference>
<dbReference type="Gene3D" id="3.90.930.12">
    <property type="entry name" value="Ribosomal protein L6, alpha-beta domain"/>
    <property type="match status" value="2"/>
</dbReference>
<dbReference type="HAMAP" id="MF_01365_B">
    <property type="entry name" value="Ribosomal_uL6_B"/>
    <property type="match status" value="1"/>
</dbReference>
<dbReference type="InterPro" id="IPR000702">
    <property type="entry name" value="Ribosomal_uL6-like"/>
</dbReference>
<dbReference type="InterPro" id="IPR036789">
    <property type="entry name" value="Ribosomal_uL6-like_a/b-dom_sf"/>
</dbReference>
<dbReference type="InterPro" id="IPR020040">
    <property type="entry name" value="Ribosomal_uL6_a/b-dom"/>
</dbReference>
<dbReference type="InterPro" id="IPR019906">
    <property type="entry name" value="Ribosomal_uL6_bac-type"/>
</dbReference>
<dbReference type="InterPro" id="IPR002358">
    <property type="entry name" value="Ribosomal_uL6_CS"/>
</dbReference>
<dbReference type="NCBIfam" id="TIGR03654">
    <property type="entry name" value="L6_bact"/>
    <property type="match status" value="1"/>
</dbReference>
<dbReference type="PANTHER" id="PTHR11655">
    <property type="entry name" value="60S/50S RIBOSOMAL PROTEIN L6/L9"/>
    <property type="match status" value="1"/>
</dbReference>
<dbReference type="PANTHER" id="PTHR11655:SF14">
    <property type="entry name" value="LARGE RIBOSOMAL SUBUNIT PROTEIN UL6M"/>
    <property type="match status" value="1"/>
</dbReference>
<dbReference type="Pfam" id="PF00347">
    <property type="entry name" value="Ribosomal_L6"/>
    <property type="match status" value="2"/>
</dbReference>
<dbReference type="PIRSF" id="PIRSF002162">
    <property type="entry name" value="Ribosomal_L6"/>
    <property type="match status" value="1"/>
</dbReference>
<dbReference type="PRINTS" id="PR00059">
    <property type="entry name" value="RIBOSOMALL6"/>
</dbReference>
<dbReference type="SUPFAM" id="SSF56053">
    <property type="entry name" value="Ribosomal protein L6"/>
    <property type="match status" value="2"/>
</dbReference>
<dbReference type="PROSITE" id="PS00525">
    <property type="entry name" value="RIBOSOMAL_L6_1"/>
    <property type="match status" value="1"/>
</dbReference>
<sequence>MSRVGKMPIAIPAGVTVTVTPENVVTVKGPKGELVKAMHKDINIAVEDAQVVVTRPSDVKEHRALHGLTRALLNNMVVGVSQGFSKTLELNGVGYRAQLQGKKLVMNLGYSHPVEVEAVDGVDFKLDGTTKVIVEGIDKEKVGAVAANIRSWRKPEPYKGKGIKYSDEVIRRKEGKTGK</sequence>
<comment type="function">
    <text evidence="1">This protein binds to the 23S rRNA, and is important in its secondary structure. It is located near the subunit interface in the base of the L7/L12 stalk, and near the tRNA binding site of the peptidyltransferase center.</text>
</comment>
<comment type="subunit">
    <text evidence="1">Part of the 50S ribosomal subunit.</text>
</comment>
<comment type="similarity">
    <text evidence="1">Belongs to the universal ribosomal protein uL6 family.</text>
</comment>
<gene>
    <name evidence="1" type="primary">rplF</name>
    <name type="ordered locus">CPF_2699</name>
</gene>
<reference key="1">
    <citation type="journal article" date="2006" name="Genome Res.">
        <title>Skewed genomic variability in strains of the toxigenic bacterial pathogen, Clostridium perfringens.</title>
        <authorList>
            <person name="Myers G.S.A."/>
            <person name="Rasko D.A."/>
            <person name="Cheung J.K."/>
            <person name="Ravel J."/>
            <person name="Seshadri R."/>
            <person name="DeBoy R.T."/>
            <person name="Ren Q."/>
            <person name="Varga J."/>
            <person name="Awad M.M."/>
            <person name="Brinkac L.M."/>
            <person name="Daugherty S.C."/>
            <person name="Haft D.H."/>
            <person name="Dodson R.J."/>
            <person name="Madupu R."/>
            <person name="Nelson W.C."/>
            <person name="Rosovitz M.J."/>
            <person name="Sullivan S.A."/>
            <person name="Khouri H."/>
            <person name="Dimitrov G.I."/>
            <person name="Watkins K.L."/>
            <person name="Mulligan S."/>
            <person name="Benton J."/>
            <person name="Radune D."/>
            <person name="Fisher D.J."/>
            <person name="Atkins H.S."/>
            <person name="Hiscox T."/>
            <person name="Jost B.H."/>
            <person name="Billington S.J."/>
            <person name="Songer J.G."/>
            <person name="McClane B.A."/>
            <person name="Titball R.W."/>
            <person name="Rood J.I."/>
            <person name="Melville S.B."/>
            <person name="Paulsen I.T."/>
        </authorList>
    </citation>
    <scope>NUCLEOTIDE SEQUENCE [LARGE SCALE GENOMIC DNA]</scope>
    <source>
        <strain>ATCC 13124 / DSM 756 / JCM 1290 / NCIMB 6125 / NCTC 8237 / S 107 / Type A</strain>
    </source>
</reference>